<feature type="chain" id="PRO_1000141626" description="Large ribosomal subunit protein uL2">
    <location>
        <begin position="1"/>
        <end position="274"/>
    </location>
</feature>
<feature type="region of interest" description="Disordered" evidence="2">
    <location>
        <begin position="221"/>
        <end position="254"/>
    </location>
</feature>
<evidence type="ECO:0000255" key="1">
    <source>
        <dbReference type="HAMAP-Rule" id="MF_01320"/>
    </source>
</evidence>
<evidence type="ECO:0000256" key="2">
    <source>
        <dbReference type="SAM" id="MobiDB-lite"/>
    </source>
</evidence>
<evidence type="ECO:0000305" key="3"/>
<reference key="1">
    <citation type="journal article" date="2009" name="J. Bacteriol.">
        <title>Complete and draft genome sequences of six members of the Aquificales.</title>
        <authorList>
            <person name="Reysenbach A.-L."/>
            <person name="Hamamura N."/>
            <person name="Podar M."/>
            <person name="Griffiths E."/>
            <person name="Ferreira S."/>
            <person name="Hochstein R."/>
            <person name="Heidelberg J."/>
            <person name="Johnson J."/>
            <person name="Mead D."/>
            <person name="Pohorille A."/>
            <person name="Sarmiento M."/>
            <person name="Schweighofer K."/>
            <person name="Seshadri R."/>
            <person name="Voytek M.A."/>
        </authorList>
    </citation>
    <scope>NUCLEOTIDE SEQUENCE [LARGE SCALE GENOMIC DNA]</scope>
    <source>
        <strain>YO3AOP1</strain>
    </source>
</reference>
<name>RL2_SULSY</name>
<organism>
    <name type="scientific">Sulfurihydrogenibium sp. (strain YO3AOP1)</name>
    <dbReference type="NCBI Taxonomy" id="436114"/>
    <lineage>
        <taxon>Bacteria</taxon>
        <taxon>Pseudomonadati</taxon>
        <taxon>Aquificota</taxon>
        <taxon>Aquificia</taxon>
        <taxon>Aquificales</taxon>
        <taxon>Hydrogenothermaceae</taxon>
        <taxon>Sulfurihydrogenibium</taxon>
    </lineage>
</organism>
<gene>
    <name evidence="1" type="primary">rplB</name>
    <name type="ordered locus">SYO3AOP1_0288</name>
</gene>
<protein>
    <recommendedName>
        <fullName evidence="1">Large ribosomal subunit protein uL2</fullName>
    </recommendedName>
    <alternativeName>
        <fullName evidence="3">50S ribosomal protein L2</fullName>
    </alternativeName>
</protein>
<dbReference type="EMBL" id="CP001080">
    <property type="protein sequence ID" value="ACD65933.1"/>
    <property type="molecule type" value="Genomic_DNA"/>
</dbReference>
<dbReference type="RefSeq" id="WP_012459022.1">
    <property type="nucleotide sequence ID" value="NC_010730.1"/>
</dbReference>
<dbReference type="SMR" id="B2V7L0"/>
<dbReference type="STRING" id="436114.SYO3AOP1_0288"/>
<dbReference type="KEGG" id="sul:SYO3AOP1_0288"/>
<dbReference type="eggNOG" id="COG0090">
    <property type="taxonomic scope" value="Bacteria"/>
</dbReference>
<dbReference type="HOGENOM" id="CLU_036235_2_1_0"/>
<dbReference type="GO" id="GO:0015934">
    <property type="term" value="C:large ribosomal subunit"/>
    <property type="evidence" value="ECO:0007669"/>
    <property type="project" value="InterPro"/>
</dbReference>
<dbReference type="GO" id="GO:0019843">
    <property type="term" value="F:rRNA binding"/>
    <property type="evidence" value="ECO:0007669"/>
    <property type="project" value="UniProtKB-UniRule"/>
</dbReference>
<dbReference type="GO" id="GO:0003735">
    <property type="term" value="F:structural constituent of ribosome"/>
    <property type="evidence" value="ECO:0007669"/>
    <property type="project" value="InterPro"/>
</dbReference>
<dbReference type="GO" id="GO:0016740">
    <property type="term" value="F:transferase activity"/>
    <property type="evidence" value="ECO:0007669"/>
    <property type="project" value="InterPro"/>
</dbReference>
<dbReference type="GO" id="GO:0002181">
    <property type="term" value="P:cytoplasmic translation"/>
    <property type="evidence" value="ECO:0007669"/>
    <property type="project" value="TreeGrafter"/>
</dbReference>
<dbReference type="FunFam" id="2.30.30.30:FF:000001">
    <property type="entry name" value="50S ribosomal protein L2"/>
    <property type="match status" value="1"/>
</dbReference>
<dbReference type="FunFam" id="2.40.50.140:FF:000003">
    <property type="entry name" value="50S ribosomal protein L2"/>
    <property type="match status" value="1"/>
</dbReference>
<dbReference type="FunFam" id="4.10.950.10:FF:000001">
    <property type="entry name" value="50S ribosomal protein L2"/>
    <property type="match status" value="1"/>
</dbReference>
<dbReference type="Gene3D" id="2.30.30.30">
    <property type="match status" value="1"/>
</dbReference>
<dbReference type="Gene3D" id="2.40.50.140">
    <property type="entry name" value="Nucleic acid-binding proteins"/>
    <property type="match status" value="1"/>
</dbReference>
<dbReference type="Gene3D" id="4.10.950.10">
    <property type="entry name" value="Ribosomal protein L2, domain 3"/>
    <property type="match status" value="1"/>
</dbReference>
<dbReference type="HAMAP" id="MF_01320_B">
    <property type="entry name" value="Ribosomal_uL2_B"/>
    <property type="match status" value="1"/>
</dbReference>
<dbReference type="InterPro" id="IPR012340">
    <property type="entry name" value="NA-bd_OB-fold"/>
</dbReference>
<dbReference type="InterPro" id="IPR014722">
    <property type="entry name" value="Rib_uL2_dom2"/>
</dbReference>
<dbReference type="InterPro" id="IPR002171">
    <property type="entry name" value="Ribosomal_uL2"/>
</dbReference>
<dbReference type="InterPro" id="IPR005880">
    <property type="entry name" value="Ribosomal_uL2_bac/org-type"/>
</dbReference>
<dbReference type="InterPro" id="IPR022669">
    <property type="entry name" value="Ribosomal_uL2_C"/>
</dbReference>
<dbReference type="InterPro" id="IPR022671">
    <property type="entry name" value="Ribosomal_uL2_CS"/>
</dbReference>
<dbReference type="InterPro" id="IPR014726">
    <property type="entry name" value="Ribosomal_uL2_dom3"/>
</dbReference>
<dbReference type="InterPro" id="IPR022666">
    <property type="entry name" value="Ribosomal_uL2_RNA-bd_dom"/>
</dbReference>
<dbReference type="InterPro" id="IPR008991">
    <property type="entry name" value="Translation_prot_SH3-like_sf"/>
</dbReference>
<dbReference type="NCBIfam" id="TIGR01171">
    <property type="entry name" value="rplB_bact"/>
    <property type="match status" value="1"/>
</dbReference>
<dbReference type="PANTHER" id="PTHR13691:SF5">
    <property type="entry name" value="LARGE RIBOSOMAL SUBUNIT PROTEIN UL2M"/>
    <property type="match status" value="1"/>
</dbReference>
<dbReference type="PANTHER" id="PTHR13691">
    <property type="entry name" value="RIBOSOMAL PROTEIN L2"/>
    <property type="match status" value="1"/>
</dbReference>
<dbReference type="Pfam" id="PF00181">
    <property type="entry name" value="Ribosomal_L2"/>
    <property type="match status" value="1"/>
</dbReference>
<dbReference type="Pfam" id="PF03947">
    <property type="entry name" value="Ribosomal_L2_C"/>
    <property type="match status" value="1"/>
</dbReference>
<dbReference type="PIRSF" id="PIRSF002158">
    <property type="entry name" value="Ribosomal_L2"/>
    <property type="match status" value="1"/>
</dbReference>
<dbReference type="SMART" id="SM01383">
    <property type="entry name" value="Ribosomal_L2"/>
    <property type="match status" value="1"/>
</dbReference>
<dbReference type="SMART" id="SM01382">
    <property type="entry name" value="Ribosomal_L2_C"/>
    <property type="match status" value="1"/>
</dbReference>
<dbReference type="SUPFAM" id="SSF50249">
    <property type="entry name" value="Nucleic acid-binding proteins"/>
    <property type="match status" value="1"/>
</dbReference>
<dbReference type="SUPFAM" id="SSF50104">
    <property type="entry name" value="Translation proteins SH3-like domain"/>
    <property type="match status" value="1"/>
</dbReference>
<dbReference type="PROSITE" id="PS00467">
    <property type="entry name" value="RIBOSOMAL_L2"/>
    <property type="match status" value="1"/>
</dbReference>
<comment type="function">
    <text evidence="1">One of the primary rRNA binding proteins. Required for association of the 30S and 50S subunits to form the 70S ribosome, for tRNA binding and peptide bond formation. It has been suggested to have peptidyltransferase activity; this is somewhat controversial. Makes several contacts with the 16S rRNA in the 70S ribosome.</text>
</comment>
<comment type="subunit">
    <text evidence="1">Part of the 50S ribosomal subunit. Forms a bridge to the 30S subunit in the 70S ribosome.</text>
</comment>
<comment type="similarity">
    <text evidence="1">Belongs to the universal ribosomal protein uL2 family.</text>
</comment>
<accession>B2V7L0</accession>
<keyword id="KW-0687">Ribonucleoprotein</keyword>
<keyword id="KW-0689">Ribosomal protein</keyword>
<keyword id="KW-0694">RNA-binding</keyword>
<keyword id="KW-0699">rRNA-binding</keyword>
<proteinExistence type="inferred from homology"/>
<sequence length="274" mass="30310">MGVRKLKPVTNGTRHAILYDFAEITKSEPEKSLVEPLKKHAGRNNQGRITVRHRGGGHKRLYRIIDFKRDKWGIPAKVAAIEYDPNRSARIALLHYLDGEKRYIIWPEGLKVGDYIMAGPDAEIKVGNALPLENIPVGTLVHNIELTPGKGGQLVRAAGMSAQILGREGDYVQIRLPSGELRLVYKKCMATIGAVGLAEHELLELGKAGRSRWLGIRPTVRGTAMNPADHPHGGGEGRTFGKHPVSPWGLPTKGYKTRRGAKYSDKFIIKRRGK</sequence>